<feature type="chain" id="PRO_0000267554" description="Type III pantothenate kinase">
    <location>
        <begin position="1"/>
        <end position="257"/>
    </location>
</feature>
<feature type="active site" description="Proton acceptor" evidence="1">
    <location>
        <position position="111"/>
    </location>
</feature>
<feature type="binding site" evidence="1">
    <location>
        <begin position="6"/>
        <end position="13"/>
    </location>
    <ligand>
        <name>ATP</name>
        <dbReference type="ChEBI" id="CHEBI:30616"/>
    </ligand>
</feature>
<feature type="binding site" evidence="1">
    <location>
        <position position="102"/>
    </location>
    <ligand>
        <name>substrate</name>
    </ligand>
</feature>
<feature type="binding site" evidence="1">
    <location>
        <begin position="109"/>
        <end position="112"/>
    </location>
    <ligand>
        <name>substrate</name>
    </ligand>
</feature>
<feature type="binding site" evidence="1">
    <location>
        <position position="131"/>
    </location>
    <ligand>
        <name>K(+)</name>
        <dbReference type="ChEBI" id="CHEBI:29103"/>
    </ligand>
</feature>
<feature type="binding site" evidence="1">
    <location>
        <position position="134"/>
    </location>
    <ligand>
        <name>ATP</name>
        <dbReference type="ChEBI" id="CHEBI:30616"/>
    </ligand>
</feature>
<feature type="binding site" evidence="1">
    <location>
        <position position="186"/>
    </location>
    <ligand>
        <name>substrate</name>
    </ligand>
</feature>
<organism>
    <name type="scientific">Leptospira interrogans serogroup Icterohaemorrhagiae serovar Lai (strain 56601)</name>
    <dbReference type="NCBI Taxonomy" id="189518"/>
    <lineage>
        <taxon>Bacteria</taxon>
        <taxon>Pseudomonadati</taxon>
        <taxon>Spirochaetota</taxon>
        <taxon>Spirochaetia</taxon>
        <taxon>Leptospirales</taxon>
        <taxon>Leptospiraceae</taxon>
        <taxon>Leptospira</taxon>
    </lineage>
</organism>
<dbReference type="EC" id="2.7.1.33" evidence="1"/>
<dbReference type="EMBL" id="AE010300">
    <property type="protein sequence ID" value="AAN48032.1"/>
    <property type="molecule type" value="Genomic_DNA"/>
</dbReference>
<dbReference type="RefSeq" id="NP_711014.1">
    <property type="nucleotide sequence ID" value="NC_004342.2"/>
</dbReference>
<dbReference type="RefSeq" id="WP_000928025.1">
    <property type="nucleotide sequence ID" value="NC_004342.2"/>
</dbReference>
<dbReference type="SMR" id="Q8F7V9"/>
<dbReference type="STRING" id="189518.LA_0833"/>
<dbReference type="PaxDb" id="189518-LA_0833"/>
<dbReference type="EnsemblBacteria" id="AAN48032">
    <property type="protein sequence ID" value="AAN48032"/>
    <property type="gene ID" value="LA_0833"/>
</dbReference>
<dbReference type="KEGG" id="lil:LA_0833"/>
<dbReference type="PATRIC" id="fig|189518.3.peg.836"/>
<dbReference type="HOGENOM" id="CLU_066627_1_0_12"/>
<dbReference type="InParanoid" id="Q8F7V9"/>
<dbReference type="OrthoDB" id="9804707at2"/>
<dbReference type="UniPathway" id="UPA00241">
    <property type="reaction ID" value="UER00352"/>
</dbReference>
<dbReference type="PRO" id="PR:Q8F7V9"/>
<dbReference type="Proteomes" id="UP000001408">
    <property type="component" value="Chromosome I"/>
</dbReference>
<dbReference type="GO" id="GO:0005737">
    <property type="term" value="C:cytoplasm"/>
    <property type="evidence" value="ECO:0007669"/>
    <property type="project" value="UniProtKB-SubCell"/>
</dbReference>
<dbReference type="GO" id="GO:0005524">
    <property type="term" value="F:ATP binding"/>
    <property type="evidence" value="ECO:0007669"/>
    <property type="project" value="UniProtKB-UniRule"/>
</dbReference>
<dbReference type="GO" id="GO:0046872">
    <property type="term" value="F:metal ion binding"/>
    <property type="evidence" value="ECO:0007669"/>
    <property type="project" value="UniProtKB-KW"/>
</dbReference>
<dbReference type="GO" id="GO:0004594">
    <property type="term" value="F:pantothenate kinase activity"/>
    <property type="evidence" value="ECO:0007669"/>
    <property type="project" value="UniProtKB-UniRule"/>
</dbReference>
<dbReference type="GO" id="GO:0015937">
    <property type="term" value="P:coenzyme A biosynthetic process"/>
    <property type="evidence" value="ECO:0007669"/>
    <property type="project" value="UniProtKB-UniRule"/>
</dbReference>
<dbReference type="CDD" id="cd24015">
    <property type="entry name" value="ASKHA_NBD_PanK-III"/>
    <property type="match status" value="1"/>
</dbReference>
<dbReference type="Gene3D" id="3.30.420.40">
    <property type="match status" value="2"/>
</dbReference>
<dbReference type="HAMAP" id="MF_01274">
    <property type="entry name" value="Pantothen_kinase_3"/>
    <property type="match status" value="1"/>
</dbReference>
<dbReference type="InterPro" id="IPR043129">
    <property type="entry name" value="ATPase_NBD"/>
</dbReference>
<dbReference type="InterPro" id="IPR004619">
    <property type="entry name" value="Type_III_PanK"/>
</dbReference>
<dbReference type="NCBIfam" id="TIGR00671">
    <property type="entry name" value="baf"/>
    <property type="match status" value="1"/>
</dbReference>
<dbReference type="NCBIfam" id="NF009848">
    <property type="entry name" value="PRK13318.1-6"/>
    <property type="match status" value="1"/>
</dbReference>
<dbReference type="NCBIfam" id="NF009855">
    <property type="entry name" value="PRK13321.1"/>
    <property type="match status" value="1"/>
</dbReference>
<dbReference type="PANTHER" id="PTHR34265">
    <property type="entry name" value="TYPE III PANTOTHENATE KINASE"/>
    <property type="match status" value="1"/>
</dbReference>
<dbReference type="PANTHER" id="PTHR34265:SF1">
    <property type="entry name" value="TYPE III PANTOTHENATE KINASE"/>
    <property type="match status" value="1"/>
</dbReference>
<dbReference type="Pfam" id="PF03309">
    <property type="entry name" value="Pan_kinase"/>
    <property type="match status" value="1"/>
</dbReference>
<dbReference type="SUPFAM" id="SSF53067">
    <property type="entry name" value="Actin-like ATPase domain"/>
    <property type="match status" value="2"/>
</dbReference>
<evidence type="ECO:0000255" key="1">
    <source>
        <dbReference type="HAMAP-Rule" id="MF_01274"/>
    </source>
</evidence>
<gene>
    <name evidence="1" type="primary">coaX</name>
    <name type="ordered locus">LA_0833</name>
</gene>
<sequence>MLLVVDVGNTNTVFGIFENGNKIPLFHKRTVTRKDRTSDELGLFFRGFLREFKIENEMITGGIYSSVVPTLNPILDRMFQDWFKIEAIRVHYQMKLPFSISYPRPYEIGADRLVNAATCAIDFPGKSIIIDLGTATTFCVVNEKPEYLGGVIAPGLKVSMDALTRNTSQLPPIVFQSPGKILGDSTIESIQAGFFFGWIGLLEGIIREIKKDKGQDYQVIGTGGLVTVIDAAHPGIFDKIDPLLTLRGLQILHLMNS</sequence>
<comment type="function">
    <text evidence="1">Catalyzes the phosphorylation of pantothenate (Pan), the first step in CoA biosynthesis.</text>
</comment>
<comment type="catalytic activity">
    <reaction evidence="1">
        <text>(R)-pantothenate + ATP = (R)-4'-phosphopantothenate + ADP + H(+)</text>
        <dbReference type="Rhea" id="RHEA:16373"/>
        <dbReference type="ChEBI" id="CHEBI:10986"/>
        <dbReference type="ChEBI" id="CHEBI:15378"/>
        <dbReference type="ChEBI" id="CHEBI:29032"/>
        <dbReference type="ChEBI" id="CHEBI:30616"/>
        <dbReference type="ChEBI" id="CHEBI:456216"/>
        <dbReference type="EC" id="2.7.1.33"/>
    </reaction>
</comment>
<comment type="cofactor">
    <cofactor evidence="1">
        <name>NH4(+)</name>
        <dbReference type="ChEBI" id="CHEBI:28938"/>
    </cofactor>
    <cofactor evidence="1">
        <name>K(+)</name>
        <dbReference type="ChEBI" id="CHEBI:29103"/>
    </cofactor>
    <text evidence="1">A monovalent cation. Ammonium or potassium.</text>
</comment>
<comment type="pathway">
    <text evidence="1">Cofactor biosynthesis; coenzyme A biosynthesis; CoA from (R)-pantothenate: step 1/5.</text>
</comment>
<comment type="subunit">
    <text evidence="1">Homodimer.</text>
</comment>
<comment type="subcellular location">
    <subcellularLocation>
        <location evidence="1">Cytoplasm</location>
    </subcellularLocation>
</comment>
<comment type="similarity">
    <text evidence="1">Belongs to the type III pantothenate kinase family.</text>
</comment>
<name>COAX_LEPIN</name>
<proteinExistence type="inferred from homology"/>
<accession>Q8F7V9</accession>
<keyword id="KW-0067">ATP-binding</keyword>
<keyword id="KW-0173">Coenzyme A biosynthesis</keyword>
<keyword id="KW-0963">Cytoplasm</keyword>
<keyword id="KW-0418">Kinase</keyword>
<keyword id="KW-0479">Metal-binding</keyword>
<keyword id="KW-0547">Nucleotide-binding</keyword>
<keyword id="KW-0630">Potassium</keyword>
<keyword id="KW-1185">Reference proteome</keyword>
<keyword id="KW-0808">Transferase</keyword>
<protein>
    <recommendedName>
        <fullName evidence="1">Type III pantothenate kinase</fullName>
        <ecNumber evidence="1">2.7.1.33</ecNumber>
    </recommendedName>
    <alternativeName>
        <fullName evidence="1">PanK-III</fullName>
    </alternativeName>
    <alternativeName>
        <fullName evidence="1">Pantothenic acid kinase</fullName>
    </alternativeName>
</protein>
<reference key="1">
    <citation type="journal article" date="2003" name="Nature">
        <title>Unique physiological and pathogenic features of Leptospira interrogans revealed by whole-genome sequencing.</title>
        <authorList>
            <person name="Ren S.-X."/>
            <person name="Fu G."/>
            <person name="Jiang X.-G."/>
            <person name="Zeng R."/>
            <person name="Miao Y.-G."/>
            <person name="Xu H."/>
            <person name="Zhang Y.-X."/>
            <person name="Xiong H."/>
            <person name="Lu G."/>
            <person name="Lu L.-F."/>
            <person name="Jiang H.-Q."/>
            <person name="Jia J."/>
            <person name="Tu Y.-F."/>
            <person name="Jiang J.-X."/>
            <person name="Gu W.-Y."/>
            <person name="Zhang Y.-Q."/>
            <person name="Cai Z."/>
            <person name="Sheng H.-H."/>
            <person name="Yin H.-F."/>
            <person name="Zhang Y."/>
            <person name="Zhu G.-F."/>
            <person name="Wan M."/>
            <person name="Huang H.-L."/>
            <person name="Qian Z."/>
            <person name="Wang S.-Y."/>
            <person name="Ma W."/>
            <person name="Yao Z.-J."/>
            <person name="Shen Y."/>
            <person name="Qiang B.-Q."/>
            <person name="Xia Q.-C."/>
            <person name="Guo X.-K."/>
            <person name="Danchin A."/>
            <person name="Saint Girons I."/>
            <person name="Somerville R.L."/>
            <person name="Wen Y.-M."/>
            <person name="Shi M.-H."/>
            <person name="Chen Z."/>
            <person name="Xu J.-G."/>
            <person name="Zhao G.-P."/>
        </authorList>
    </citation>
    <scope>NUCLEOTIDE SEQUENCE [LARGE SCALE GENOMIC DNA]</scope>
    <source>
        <strain>56601</strain>
    </source>
</reference>